<protein>
    <recommendedName>
        <fullName evidence="1">Alanine racemase</fullName>
        <ecNumber evidence="1">5.1.1.1</ecNumber>
    </recommendedName>
</protein>
<gene>
    <name type="primary">alr</name>
    <name type="ordered locus">CTC_02513</name>
</gene>
<dbReference type="EC" id="5.1.1.1" evidence="1"/>
<dbReference type="EMBL" id="AE015927">
    <property type="protein sequence ID" value="AAO36974.1"/>
    <property type="molecule type" value="Genomic_DNA"/>
</dbReference>
<dbReference type="RefSeq" id="WP_011100635.1">
    <property type="nucleotide sequence ID" value="NC_004557.1"/>
</dbReference>
<dbReference type="SMR" id="Q890X1"/>
<dbReference type="STRING" id="212717.CTC_02513"/>
<dbReference type="GeneID" id="24254514"/>
<dbReference type="KEGG" id="ctc:CTC_02513"/>
<dbReference type="HOGENOM" id="CLU_028393_2_2_9"/>
<dbReference type="OrthoDB" id="9813814at2"/>
<dbReference type="UniPathway" id="UPA00042">
    <property type="reaction ID" value="UER00497"/>
</dbReference>
<dbReference type="Proteomes" id="UP000001412">
    <property type="component" value="Chromosome"/>
</dbReference>
<dbReference type="GO" id="GO:0005829">
    <property type="term" value="C:cytosol"/>
    <property type="evidence" value="ECO:0007669"/>
    <property type="project" value="TreeGrafter"/>
</dbReference>
<dbReference type="GO" id="GO:0008784">
    <property type="term" value="F:alanine racemase activity"/>
    <property type="evidence" value="ECO:0007669"/>
    <property type="project" value="UniProtKB-UniRule"/>
</dbReference>
<dbReference type="GO" id="GO:0030170">
    <property type="term" value="F:pyridoxal phosphate binding"/>
    <property type="evidence" value="ECO:0007669"/>
    <property type="project" value="UniProtKB-UniRule"/>
</dbReference>
<dbReference type="GO" id="GO:0030632">
    <property type="term" value="P:D-alanine biosynthetic process"/>
    <property type="evidence" value="ECO:0007669"/>
    <property type="project" value="UniProtKB-UniRule"/>
</dbReference>
<dbReference type="GO" id="GO:0009252">
    <property type="term" value="P:peptidoglycan biosynthetic process"/>
    <property type="evidence" value="ECO:0007669"/>
    <property type="project" value="TreeGrafter"/>
</dbReference>
<dbReference type="CDD" id="cd00430">
    <property type="entry name" value="PLPDE_III_AR"/>
    <property type="match status" value="1"/>
</dbReference>
<dbReference type="FunFam" id="2.40.37.10:FF:000006">
    <property type="entry name" value="Alanine racemase"/>
    <property type="match status" value="1"/>
</dbReference>
<dbReference type="FunFam" id="3.20.20.10:FF:000002">
    <property type="entry name" value="Alanine racemase"/>
    <property type="match status" value="1"/>
</dbReference>
<dbReference type="Gene3D" id="3.20.20.10">
    <property type="entry name" value="Alanine racemase"/>
    <property type="match status" value="1"/>
</dbReference>
<dbReference type="Gene3D" id="2.40.37.10">
    <property type="entry name" value="Lyase, Ornithine Decarboxylase, Chain A, domain 1"/>
    <property type="match status" value="1"/>
</dbReference>
<dbReference type="HAMAP" id="MF_01201">
    <property type="entry name" value="Ala_racemase"/>
    <property type="match status" value="1"/>
</dbReference>
<dbReference type="InterPro" id="IPR000821">
    <property type="entry name" value="Ala_racemase"/>
</dbReference>
<dbReference type="InterPro" id="IPR009006">
    <property type="entry name" value="Ala_racemase/Decarboxylase_C"/>
</dbReference>
<dbReference type="InterPro" id="IPR011079">
    <property type="entry name" value="Ala_racemase_C"/>
</dbReference>
<dbReference type="InterPro" id="IPR001608">
    <property type="entry name" value="Ala_racemase_N"/>
</dbReference>
<dbReference type="InterPro" id="IPR020622">
    <property type="entry name" value="Ala_racemase_pyridoxalP-BS"/>
</dbReference>
<dbReference type="InterPro" id="IPR029066">
    <property type="entry name" value="PLP-binding_barrel"/>
</dbReference>
<dbReference type="NCBIfam" id="TIGR00492">
    <property type="entry name" value="alr"/>
    <property type="match status" value="1"/>
</dbReference>
<dbReference type="PANTHER" id="PTHR30511">
    <property type="entry name" value="ALANINE RACEMASE"/>
    <property type="match status" value="1"/>
</dbReference>
<dbReference type="PANTHER" id="PTHR30511:SF0">
    <property type="entry name" value="ALANINE RACEMASE, CATABOLIC-RELATED"/>
    <property type="match status" value="1"/>
</dbReference>
<dbReference type="Pfam" id="PF00842">
    <property type="entry name" value="Ala_racemase_C"/>
    <property type="match status" value="1"/>
</dbReference>
<dbReference type="Pfam" id="PF01168">
    <property type="entry name" value="Ala_racemase_N"/>
    <property type="match status" value="1"/>
</dbReference>
<dbReference type="PRINTS" id="PR00992">
    <property type="entry name" value="ALARACEMASE"/>
</dbReference>
<dbReference type="SMART" id="SM01005">
    <property type="entry name" value="Ala_racemase_C"/>
    <property type="match status" value="1"/>
</dbReference>
<dbReference type="SUPFAM" id="SSF50621">
    <property type="entry name" value="Alanine racemase C-terminal domain-like"/>
    <property type="match status" value="1"/>
</dbReference>
<dbReference type="SUPFAM" id="SSF51419">
    <property type="entry name" value="PLP-binding barrel"/>
    <property type="match status" value="1"/>
</dbReference>
<dbReference type="PROSITE" id="PS00395">
    <property type="entry name" value="ALANINE_RACEMASE"/>
    <property type="match status" value="1"/>
</dbReference>
<organism>
    <name type="scientific">Clostridium tetani (strain Massachusetts / E88)</name>
    <dbReference type="NCBI Taxonomy" id="212717"/>
    <lineage>
        <taxon>Bacteria</taxon>
        <taxon>Bacillati</taxon>
        <taxon>Bacillota</taxon>
        <taxon>Clostridia</taxon>
        <taxon>Eubacteriales</taxon>
        <taxon>Clostridiaceae</taxon>
        <taxon>Clostridium</taxon>
    </lineage>
</organism>
<accession>Q890X1</accession>
<reference key="1">
    <citation type="journal article" date="2003" name="Proc. Natl. Acad. Sci. U.S.A.">
        <title>The genome sequence of Clostridium tetani, the causative agent of tetanus disease.</title>
        <authorList>
            <person name="Brueggemann H."/>
            <person name="Baeumer S."/>
            <person name="Fricke W.F."/>
            <person name="Wiezer A."/>
            <person name="Liesegang H."/>
            <person name="Decker I."/>
            <person name="Herzberg C."/>
            <person name="Martinez-Arias R."/>
            <person name="Merkl R."/>
            <person name="Henne A."/>
            <person name="Gottschalk G."/>
        </authorList>
    </citation>
    <scope>NUCLEOTIDE SEQUENCE [LARGE SCALE GENOMIC DNA]</scope>
    <source>
        <strain>Massachusetts / E88</strain>
    </source>
</reference>
<proteinExistence type="inferred from homology"/>
<name>ALR_CLOTE</name>
<keyword id="KW-0413">Isomerase</keyword>
<keyword id="KW-0663">Pyridoxal phosphate</keyword>
<keyword id="KW-1185">Reference proteome</keyword>
<comment type="function">
    <text evidence="1">Catalyzes the interconversion of L-alanine and D-alanine. May also act on other amino acids.</text>
</comment>
<comment type="catalytic activity">
    <reaction evidence="1">
        <text>L-alanine = D-alanine</text>
        <dbReference type="Rhea" id="RHEA:20249"/>
        <dbReference type="ChEBI" id="CHEBI:57416"/>
        <dbReference type="ChEBI" id="CHEBI:57972"/>
        <dbReference type="EC" id="5.1.1.1"/>
    </reaction>
</comment>
<comment type="cofactor">
    <cofactor evidence="1">
        <name>pyridoxal 5'-phosphate</name>
        <dbReference type="ChEBI" id="CHEBI:597326"/>
    </cofactor>
</comment>
<comment type="pathway">
    <text evidence="1">Amino-acid biosynthesis; D-alanine biosynthesis; D-alanine from L-alanine: step 1/1.</text>
</comment>
<comment type="similarity">
    <text evidence="1">Belongs to the alanine racemase family.</text>
</comment>
<evidence type="ECO:0000255" key="1">
    <source>
        <dbReference type="HAMAP-Rule" id="MF_01201"/>
    </source>
</evidence>
<feature type="chain" id="PRO_1000065982" description="Alanine racemase">
    <location>
        <begin position="1"/>
        <end position="387"/>
    </location>
</feature>
<feature type="active site" description="Proton acceptor; specific for D-alanine" evidence="1">
    <location>
        <position position="38"/>
    </location>
</feature>
<feature type="active site" description="Proton acceptor; specific for L-alanine" evidence="1">
    <location>
        <position position="267"/>
    </location>
</feature>
<feature type="binding site" evidence="1">
    <location>
        <position position="136"/>
    </location>
    <ligand>
        <name>substrate</name>
    </ligand>
</feature>
<feature type="binding site" evidence="1">
    <location>
        <position position="316"/>
    </location>
    <ligand>
        <name>substrate</name>
    </ligand>
</feature>
<feature type="modified residue" description="N6-(pyridoxal phosphate)lysine" evidence="1">
    <location>
        <position position="38"/>
    </location>
</feature>
<sequence>MFKHLRPVWAEIDLDKLVYNMQQIKNICKGREIIAVVKADAYGHGALDIAPILLENGATRLAVAVLNEAIELRRGGIDAPIMVLGFTPDSLIETSLKYNIEQTVYSYEIAKEISEVAVKSNRVAKIHIALDTGMGRIGFLPDKESIDKIYKLSKLPNIQIEGIFSHFASADEQDKTYTKLQFNKFLWVCNSLEERGIDIKIRHIANSAAIIDMPELHLEGVRPGIIMYGYYPSSEVNKGKLDLKPVMSLKTTIVHIKNMEKGKYISYGREFKTEKESIIATLPVGYADGYSRSLYDKGGKIILKEQLAPLVGRICMDQCMIDVSHIEDVKIGDEVILMGENKGIKMTAEEIGNLLGTINYEVTCMISKRVPRVYIRDGNIVGIRNYV</sequence>